<organism>
    <name type="scientific">Gloeobacter violaceus (strain ATCC 29082 / PCC 7421)</name>
    <dbReference type="NCBI Taxonomy" id="251221"/>
    <lineage>
        <taxon>Bacteria</taxon>
        <taxon>Bacillati</taxon>
        <taxon>Cyanobacteriota</taxon>
        <taxon>Cyanophyceae</taxon>
        <taxon>Gloeobacterales</taxon>
        <taxon>Gloeobacteraceae</taxon>
        <taxon>Gloeobacter</taxon>
    </lineage>
</organism>
<comment type="function">
    <text evidence="1">F(1)F(0) ATP synthase produces ATP from ADP in the presence of a proton or sodium gradient. F-type ATPases consist of two structural domains, F(1) containing the extramembraneous catalytic core and F(0) containing the membrane proton channel, linked together by a central stalk and a peripheral stalk. During catalysis, ATP synthesis in the catalytic domain of F(1) is coupled via a rotary mechanism of the central stalk subunits to proton translocation.</text>
</comment>
<comment type="function">
    <text evidence="1">Key component of the F(0) channel; it plays a direct role in translocation across the membrane. A homomeric c-ring of between 10-14 subunits forms the central stalk rotor element with the F(1) delta and epsilon subunits.</text>
</comment>
<comment type="subunit">
    <text evidence="1">F-type ATPases have 2 components, F(1) - the catalytic core - and F(0) - the membrane proton channel. F(1) has five subunits: alpha(3), beta(3), gamma(1), delta(1), epsilon(1). F(0) has four main subunits: a(1), b(1), b'(1) and c(10-14). The alpha and beta chains form an alternating ring which encloses part of the gamma chain. F(1) is attached to F(0) by a central stalk formed by the gamma and epsilon chains, while a peripheral stalk is formed by the delta, b and b' chains.</text>
</comment>
<comment type="subcellular location">
    <subcellularLocation>
        <location evidence="1">Cell inner membrane</location>
        <topology evidence="1">Multi-pass membrane protein</topology>
    </subcellularLocation>
</comment>
<comment type="similarity">
    <text evidence="1">Belongs to the ATPase C chain family.</text>
</comment>
<accession>Q7NCR9</accession>
<dbReference type="EMBL" id="BA000045">
    <property type="protein sequence ID" value="BAC90850.1"/>
    <property type="molecule type" value="Genomic_DNA"/>
</dbReference>
<dbReference type="RefSeq" id="NP_925855.1">
    <property type="nucleotide sequence ID" value="NC_005125.1"/>
</dbReference>
<dbReference type="RefSeq" id="WP_011142903.1">
    <property type="nucleotide sequence ID" value="NC_005125.1"/>
</dbReference>
<dbReference type="SMR" id="Q7NCR9"/>
<dbReference type="FunCoup" id="Q7NCR9">
    <property type="interactions" value="95"/>
</dbReference>
<dbReference type="STRING" id="251221.gene:10760413"/>
<dbReference type="EnsemblBacteria" id="BAC90850">
    <property type="protein sequence ID" value="BAC90850"/>
    <property type="gene ID" value="BAC90850"/>
</dbReference>
<dbReference type="KEGG" id="gvi:gsl2909"/>
<dbReference type="PATRIC" id="fig|251221.4.peg.2939"/>
<dbReference type="eggNOG" id="COG0636">
    <property type="taxonomic scope" value="Bacteria"/>
</dbReference>
<dbReference type="HOGENOM" id="CLU_148047_2_0_3"/>
<dbReference type="InParanoid" id="Q7NCR9"/>
<dbReference type="OrthoDB" id="9810379at2"/>
<dbReference type="PhylomeDB" id="Q7NCR9"/>
<dbReference type="Proteomes" id="UP000000557">
    <property type="component" value="Chromosome"/>
</dbReference>
<dbReference type="GO" id="GO:0005886">
    <property type="term" value="C:plasma membrane"/>
    <property type="evidence" value="ECO:0007669"/>
    <property type="project" value="UniProtKB-SubCell"/>
</dbReference>
<dbReference type="GO" id="GO:0045259">
    <property type="term" value="C:proton-transporting ATP synthase complex"/>
    <property type="evidence" value="ECO:0007669"/>
    <property type="project" value="UniProtKB-KW"/>
</dbReference>
<dbReference type="GO" id="GO:0033177">
    <property type="term" value="C:proton-transporting two-sector ATPase complex, proton-transporting domain"/>
    <property type="evidence" value="ECO:0007669"/>
    <property type="project" value="InterPro"/>
</dbReference>
<dbReference type="GO" id="GO:0008289">
    <property type="term" value="F:lipid binding"/>
    <property type="evidence" value="ECO:0007669"/>
    <property type="project" value="UniProtKB-KW"/>
</dbReference>
<dbReference type="GO" id="GO:0046933">
    <property type="term" value="F:proton-transporting ATP synthase activity, rotational mechanism"/>
    <property type="evidence" value="ECO:0007669"/>
    <property type="project" value="UniProtKB-UniRule"/>
</dbReference>
<dbReference type="GO" id="GO:0015986">
    <property type="term" value="P:proton motive force-driven ATP synthesis"/>
    <property type="evidence" value="ECO:0000318"/>
    <property type="project" value="GO_Central"/>
</dbReference>
<dbReference type="CDD" id="cd18183">
    <property type="entry name" value="ATP-synt_Fo_c_ATPH"/>
    <property type="match status" value="1"/>
</dbReference>
<dbReference type="FunFam" id="1.20.20.10:FF:000001">
    <property type="entry name" value="ATP synthase subunit c, chloroplastic"/>
    <property type="match status" value="1"/>
</dbReference>
<dbReference type="Gene3D" id="1.20.20.10">
    <property type="entry name" value="F1F0 ATP synthase subunit C"/>
    <property type="match status" value="1"/>
</dbReference>
<dbReference type="HAMAP" id="MF_01396">
    <property type="entry name" value="ATP_synth_c_bact"/>
    <property type="match status" value="1"/>
</dbReference>
<dbReference type="InterPro" id="IPR005953">
    <property type="entry name" value="ATP_synth_csu_bac/chlpt"/>
</dbReference>
<dbReference type="InterPro" id="IPR000454">
    <property type="entry name" value="ATP_synth_F0_csu"/>
</dbReference>
<dbReference type="InterPro" id="IPR020537">
    <property type="entry name" value="ATP_synth_F0_csu_DDCD_BS"/>
</dbReference>
<dbReference type="InterPro" id="IPR038662">
    <property type="entry name" value="ATP_synth_F0_csu_sf"/>
</dbReference>
<dbReference type="InterPro" id="IPR002379">
    <property type="entry name" value="ATPase_proteolipid_c-like_dom"/>
</dbReference>
<dbReference type="InterPro" id="IPR035921">
    <property type="entry name" value="F/V-ATP_Csub_sf"/>
</dbReference>
<dbReference type="NCBIfam" id="TIGR01260">
    <property type="entry name" value="ATP_synt_c"/>
    <property type="match status" value="1"/>
</dbReference>
<dbReference type="NCBIfam" id="NF005608">
    <property type="entry name" value="PRK07354.1"/>
    <property type="match status" value="1"/>
</dbReference>
<dbReference type="PANTHER" id="PTHR10031">
    <property type="entry name" value="ATP SYNTHASE LIPID-BINDING PROTEIN, MITOCHONDRIAL"/>
    <property type="match status" value="1"/>
</dbReference>
<dbReference type="PANTHER" id="PTHR10031:SF0">
    <property type="entry name" value="ATPASE PROTEIN 9"/>
    <property type="match status" value="1"/>
</dbReference>
<dbReference type="Pfam" id="PF00137">
    <property type="entry name" value="ATP-synt_C"/>
    <property type="match status" value="1"/>
</dbReference>
<dbReference type="PRINTS" id="PR00124">
    <property type="entry name" value="ATPASEC"/>
</dbReference>
<dbReference type="SUPFAM" id="SSF81333">
    <property type="entry name" value="F1F0 ATP synthase subunit C"/>
    <property type="match status" value="1"/>
</dbReference>
<dbReference type="PROSITE" id="PS00605">
    <property type="entry name" value="ATPASE_C"/>
    <property type="match status" value="1"/>
</dbReference>
<reference key="1">
    <citation type="journal article" date="2003" name="DNA Res.">
        <title>Complete genome structure of Gloeobacter violaceus PCC 7421, a cyanobacterium that lacks thylakoids.</title>
        <authorList>
            <person name="Nakamura Y."/>
            <person name="Kaneko T."/>
            <person name="Sato S."/>
            <person name="Mimuro M."/>
            <person name="Miyashita H."/>
            <person name="Tsuchiya T."/>
            <person name="Sasamoto S."/>
            <person name="Watanabe A."/>
            <person name="Kawashima K."/>
            <person name="Kishida Y."/>
            <person name="Kiyokawa C."/>
            <person name="Kohara M."/>
            <person name="Matsumoto M."/>
            <person name="Matsuno A."/>
            <person name="Nakazaki N."/>
            <person name="Shimpo S."/>
            <person name="Takeuchi C."/>
            <person name="Yamada M."/>
            <person name="Tabata S."/>
        </authorList>
    </citation>
    <scope>NUCLEOTIDE SEQUENCE [LARGE SCALE GENOMIC DNA]</scope>
    <source>
        <strain>ATCC 29082 / PCC 7421</strain>
    </source>
</reference>
<name>ATPL_GLOVI</name>
<sequence length="82" mass="8196">MNDITAAASVIAAALAVGLAAIGPGIGQGNAASKAAEGIARQPEAEGKIRGTLLLSLAFMESLTIYGLLVSIVLLFANPFRG</sequence>
<feature type="chain" id="PRO_0000365887" description="ATP synthase subunit c">
    <location>
        <begin position="1"/>
        <end position="82"/>
    </location>
</feature>
<feature type="transmembrane region" description="Helical" evidence="1">
    <location>
        <begin position="6"/>
        <end position="26"/>
    </location>
</feature>
<feature type="transmembrane region" description="Helical" evidence="1">
    <location>
        <begin position="57"/>
        <end position="77"/>
    </location>
</feature>
<feature type="site" description="Reversibly protonated during proton transport" evidence="1">
    <location>
        <position position="61"/>
    </location>
</feature>
<evidence type="ECO:0000255" key="1">
    <source>
        <dbReference type="HAMAP-Rule" id="MF_01396"/>
    </source>
</evidence>
<gene>
    <name evidence="1" type="primary">atpE</name>
    <name evidence="1" type="synonym">atpH</name>
    <name type="ordered locus">gsl2909</name>
</gene>
<proteinExistence type="inferred from homology"/>
<protein>
    <recommendedName>
        <fullName evidence="1">ATP synthase subunit c</fullName>
    </recommendedName>
    <alternativeName>
        <fullName evidence="1">ATP synthase F(0) sector subunit c</fullName>
    </alternativeName>
    <alternativeName>
        <fullName evidence="1">F-type ATPase subunit c</fullName>
        <shortName evidence="1">F-ATPase subunit c</shortName>
    </alternativeName>
    <alternativeName>
        <fullName evidence="1">Lipid-binding protein</fullName>
    </alternativeName>
</protein>
<keyword id="KW-0066">ATP synthesis</keyword>
<keyword id="KW-0997">Cell inner membrane</keyword>
<keyword id="KW-1003">Cell membrane</keyword>
<keyword id="KW-0138">CF(0)</keyword>
<keyword id="KW-0375">Hydrogen ion transport</keyword>
<keyword id="KW-0406">Ion transport</keyword>
<keyword id="KW-0446">Lipid-binding</keyword>
<keyword id="KW-0472">Membrane</keyword>
<keyword id="KW-1185">Reference proteome</keyword>
<keyword id="KW-0812">Transmembrane</keyword>
<keyword id="KW-1133">Transmembrane helix</keyword>
<keyword id="KW-0813">Transport</keyword>